<reference key="1">
    <citation type="journal article" date="2002" name="Nature">
        <title>Sequence and analysis of chromosome 2 of Dictyostelium discoideum.</title>
        <authorList>
            <person name="Gloeckner G."/>
            <person name="Eichinger L."/>
            <person name="Szafranski K."/>
            <person name="Pachebat J.A."/>
            <person name="Bankier A.T."/>
            <person name="Dear P.H."/>
            <person name="Lehmann R."/>
            <person name="Baumgart C."/>
            <person name="Parra G."/>
            <person name="Abril J.F."/>
            <person name="Guigo R."/>
            <person name="Kumpf K."/>
            <person name="Tunggal B."/>
            <person name="Cox E.C."/>
            <person name="Quail M.A."/>
            <person name="Platzer M."/>
            <person name="Rosenthal A."/>
            <person name="Noegel A.A."/>
        </authorList>
    </citation>
    <scope>NUCLEOTIDE SEQUENCE [LARGE SCALE GENOMIC DNA]</scope>
    <source>
        <strain>AX4</strain>
    </source>
</reference>
<reference key="2">
    <citation type="journal article" date="2005" name="Nature">
        <title>The genome of the social amoeba Dictyostelium discoideum.</title>
        <authorList>
            <person name="Eichinger L."/>
            <person name="Pachebat J.A."/>
            <person name="Gloeckner G."/>
            <person name="Rajandream M.A."/>
            <person name="Sucgang R."/>
            <person name="Berriman M."/>
            <person name="Song J."/>
            <person name="Olsen R."/>
            <person name="Szafranski K."/>
            <person name="Xu Q."/>
            <person name="Tunggal B."/>
            <person name="Kummerfeld S."/>
            <person name="Madera M."/>
            <person name="Konfortov B.A."/>
            <person name="Rivero F."/>
            <person name="Bankier A.T."/>
            <person name="Lehmann R."/>
            <person name="Hamlin N."/>
            <person name="Davies R."/>
            <person name="Gaudet P."/>
            <person name="Fey P."/>
            <person name="Pilcher K."/>
            <person name="Chen G."/>
            <person name="Saunders D."/>
            <person name="Sodergren E.J."/>
            <person name="Davis P."/>
            <person name="Kerhornou A."/>
            <person name="Nie X."/>
            <person name="Hall N."/>
            <person name="Anjard C."/>
            <person name="Hemphill L."/>
            <person name="Bason N."/>
            <person name="Farbrother P."/>
            <person name="Desany B."/>
            <person name="Just E."/>
            <person name="Morio T."/>
            <person name="Rost R."/>
            <person name="Churcher C.M."/>
            <person name="Cooper J."/>
            <person name="Haydock S."/>
            <person name="van Driessche N."/>
            <person name="Cronin A."/>
            <person name="Goodhead I."/>
            <person name="Muzny D.M."/>
            <person name="Mourier T."/>
            <person name="Pain A."/>
            <person name="Lu M."/>
            <person name="Harper D."/>
            <person name="Lindsay R."/>
            <person name="Hauser H."/>
            <person name="James K.D."/>
            <person name="Quiles M."/>
            <person name="Madan Babu M."/>
            <person name="Saito T."/>
            <person name="Buchrieser C."/>
            <person name="Wardroper A."/>
            <person name="Felder M."/>
            <person name="Thangavelu M."/>
            <person name="Johnson D."/>
            <person name="Knights A."/>
            <person name="Loulseged H."/>
            <person name="Mungall K.L."/>
            <person name="Oliver K."/>
            <person name="Price C."/>
            <person name="Quail M.A."/>
            <person name="Urushihara H."/>
            <person name="Hernandez J."/>
            <person name="Rabbinowitsch E."/>
            <person name="Steffen D."/>
            <person name="Sanders M."/>
            <person name="Ma J."/>
            <person name="Kohara Y."/>
            <person name="Sharp S."/>
            <person name="Simmonds M.N."/>
            <person name="Spiegler S."/>
            <person name="Tivey A."/>
            <person name="Sugano S."/>
            <person name="White B."/>
            <person name="Walker D."/>
            <person name="Woodward J.R."/>
            <person name="Winckler T."/>
            <person name="Tanaka Y."/>
            <person name="Shaulsky G."/>
            <person name="Schleicher M."/>
            <person name="Weinstock G.M."/>
            <person name="Rosenthal A."/>
            <person name="Cox E.C."/>
            <person name="Chisholm R.L."/>
            <person name="Gibbs R.A."/>
            <person name="Loomis W.F."/>
            <person name="Platzer M."/>
            <person name="Kay R.R."/>
            <person name="Williams J.G."/>
            <person name="Dear P.H."/>
            <person name="Noegel A.A."/>
            <person name="Barrell B.G."/>
            <person name="Kuspa A."/>
        </authorList>
    </citation>
    <scope>NUCLEOTIDE SEQUENCE [LARGE SCALE GENOMIC DNA]</scope>
    <source>
        <strain>AX4</strain>
    </source>
</reference>
<keyword id="KW-0333">Golgi apparatus</keyword>
<keyword id="KW-0472">Membrane</keyword>
<keyword id="KW-1185">Reference proteome</keyword>
<keyword id="KW-0762">Sugar transport</keyword>
<keyword id="KW-0812">Transmembrane</keyword>
<keyword id="KW-1133">Transmembrane helix</keyword>
<keyword id="KW-0813">Transport</keyword>
<name>S35B4_DICDI</name>
<sequence>MIFDSLISLIPISMIMVGCCSNVISLELIMKQSQSHAILVTFFQFATVAFISFFVNIRWKQVFSIFWIPIGLRERKIPLKTYFLMVSIFFILSVLNNKALDCDIPIPFHMIFRSSSLLSTIVIGSIFYRKSYSKQQILSLIMVTLGIIFATFSSMPDSKKEISLGHEPNLLRFSIGMLMLIAAMFLSSILGLIQEHTYKLYGKDRHYETIFYSHLFSLPFFLLFKDDILHHIQLNNDSALMALPFGFGSFPTLWVYLIVNVLTQYVCIQGVFILTGKTSTLTCTLVISIRKFLSIIISVIYFNNHFTSLLFTGTILVFLGTFMYSTSGKVIEKPLPPTKQVKEIEKEKKLN</sequence>
<proteinExistence type="inferred from homology"/>
<comment type="function">
    <text evidence="1">Sugar transporter that specifically mediates the transport of UDP-N-acetylglucosamine (UDP-GlcNAc) from cytosol into Golgi.</text>
</comment>
<comment type="subcellular location">
    <subcellularLocation>
        <location evidence="1">Golgi apparatus membrane</location>
        <topology evidence="1">Multi-pass membrane protein</topology>
    </subcellularLocation>
</comment>
<comment type="similarity">
    <text evidence="3">Belongs to the nucleotide-sugar transporter family. SLC35B subfamily.</text>
</comment>
<comment type="sequence caution" evidence="3">
    <conflict type="erroneous gene model prediction">
        <sequence resource="EMBL-CDS" id="EAL69811"/>
    </conflict>
</comment>
<gene>
    <name type="primary">slc35b4</name>
    <name type="ORF">DDB_G0275061</name>
</gene>
<organism>
    <name type="scientific">Dictyostelium discoideum</name>
    <name type="common">Social amoeba</name>
    <dbReference type="NCBI Taxonomy" id="44689"/>
    <lineage>
        <taxon>Eukaryota</taxon>
        <taxon>Amoebozoa</taxon>
        <taxon>Evosea</taxon>
        <taxon>Eumycetozoa</taxon>
        <taxon>Dictyostelia</taxon>
        <taxon>Dictyosteliales</taxon>
        <taxon>Dictyosteliaceae</taxon>
        <taxon>Dictyostelium</taxon>
    </lineage>
</organism>
<feature type="chain" id="PRO_0000330913" description="UDP-N-acetylglucosamine transporter slc35b4">
    <location>
        <begin position="1"/>
        <end position="351"/>
    </location>
</feature>
<feature type="transmembrane region" description="Helical" evidence="2">
    <location>
        <begin position="6"/>
        <end position="26"/>
    </location>
</feature>
<feature type="transmembrane region" description="Helical" evidence="2">
    <location>
        <begin position="37"/>
        <end position="57"/>
    </location>
</feature>
<feature type="transmembrane region" description="Helical" evidence="2">
    <location>
        <begin position="77"/>
        <end position="97"/>
    </location>
</feature>
<feature type="transmembrane region" description="Helical" evidence="2">
    <location>
        <begin position="104"/>
        <end position="124"/>
    </location>
</feature>
<feature type="transmembrane region" description="Helical" evidence="2">
    <location>
        <begin position="136"/>
        <end position="156"/>
    </location>
</feature>
<feature type="transmembrane region" description="Helical" evidence="2">
    <location>
        <begin position="173"/>
        <end position="193"/>
    </location>
</feature>
<feature type="transmembrane region" description="Helical" evidence="2">
    <location>
        <begin position="209"/>
        <end position="229"/>
    </location>
</feature>
<feature type="transmembrane region" description="Helical" evidence="2">
    <location>
        <begin position="252"/>
        <end position="274"/>
    </location>
</feature>
<feature type="transmembrane region" description="Helical" evidence="2">
    <location>
        <begin position="282"/>
        <end position="302"/>
    </location>
</feature>
<feature type="transmembrane region" description="Helical" evidence="2">
    <location>
        <begin position="306"/>
        <end position="326"/>
    </location>
</feature>
<dbReference type="EMBL" id="AAFI02000013">
    <property type="protein sequence ID" value="EAL69811.1"/>
    <property type="status" value="ALT_SEQ"/>
    <property type="molecule type" value="Genomic_DNA"/>
</dbReference>
<dbReference type="RefSeq" id="XP_643778.1">
    <property type="nucleotide sequence ID" value="XM_638686.1"/>
</dbReference>
<dbReference type="SMR" id="Q869W7"/>
<dbReference type="FunCoup" id="Q869W7">
    <property type="interactions" value="47"/>
</dbReference>
<dbReference type="STRING" id="44689.Q869W7"/>
<dbReference type="TCDB" id="2.A.7.10.3">
    <property type="family name" value="the drug/metabolite transporter (dmt) superfamily"/>
</dbReference>
<dbReference type="PaxDb" id="44689-DDB0167452"/>
<dbReference type="EnsemblProtists" id="EAL69811">
    <property type="protein sequence ID" value="EAL69811"/>
    <property type="gene ID" value="DDB_G0275061"/>
</dbReference>
<dbReference type="GeneID" id="8619823"/>
<dbReference type="KEGG" id="ddi:DDB_G0275061"/>
<dbReference type="dictyBase" id="DDB_G0275061">
    <property type="gene designation" value="slc35b4"/>
</dbReference>
<dbReference type="VEuPathDB" id="AmoebaDB:DDB_G0275061"/>
<dbReference type="eggNOG" id="KOG1583">
    <property type="taxonomic scope" value="Eukaryota"/>
</dbReference>
<dbReference type="InParanoid" id="Q869W7"/>
<dbReference type="PhylomeDB" id="Q869W7"/>
<dbReference type="Reactome" id="R-DDI-727802">
    <property type="pathway name" value="Transport of nucleotide sugars"/>
</dbReference>
<dbReference type="PRO" id="PR:Q869W7"/>
<dbReference type="Proteomes" id="UP000002195">
    <property type="component" value="Chromosome 2"/>
</dbReference>
<dbReference type="GO" id="GO:0005789">
    <property type="term" value="C:endoplasmic reticulum membrane"/>
    <property type="evidence" value="ECO:0000318"/>
    <property type="project" value="GO_Central"/>
</dbReference>
<dbReference type="GO" id="GO:0000139">
    <property type="term" value="C:Golgi membrane"/>
    <property type="evidence" value="ECO:0000318"/>
    <property type="project" value="GO_Central"/>
</dbReference>
<dbReference type="GO" id="GO:0005462">
    <property type="term" value="F:UDP-N-acetylglucosamine transmembrane transporter activity"/>
    <property type="evidence" value="ECO:0000318"/>
    <property type="project" value="GO_Central"/>
</dbReference>
<dbReference type="GO" id="GO:0005464">
    <property type="term" value="F:UDP-xylose transmembrane transporter activity"/>
    <property type="evidence" value="ECO:0000318"/>
    <property type="project" value="GO_Central"/>
</dbReference>
<dbReference type="GO" id="GO:1990569">
    <property type="term" value="P:UDP-N-acetylglucosamine transmembrane transport"/>
    <property type="evidence" value="ECO:0000318"/>
    <property type="project" value="GO_Central"/>
</dbReference>
<dbReference type="InterPro" id="IPR013657">
    <property type="entry name" value="SCL35B1-4/HUT1"/>
</dbReference>
<dbReference type="NCBIfam" id="TIGR00803">
    <property type="entry name" value="nst"/>
    <property type="match status" value="1"/>
</dbReference>
<dbReference type="PANTHER" id="PTHR10778:SF4">
    <property type="entry name" value="NUCLEOTIDE SUGAR TRANSPORTER SLC35B4"/>
    <property type="match status" value="1"/>
</dbReference>
<dbReference type="PANTHER" id="PTHR10778">
    <property type="entry name" value="SOLUTE CARRIER FAMILY 35 MEMBER B"/>
    <property type="match status" value="1"/>
</dbReference>
<dbReference type="Pfam" id="PF08449">
    <property type="entry name" value="UAA"/>
    <property type="match status" value="1"/>
</dbReference>
<protein>
    <recommendedName>
        <fullName>UDP-N-acetylglucosamine transporter slc35b4</fullName>
    </recommendedName>
    <alternativeName>
        <fullName>Solute carrier family 35 member B4</fullName>
    </alternativeName>
</protein>
<evidence type="ECO:0000250" key="1"/>
<evidence type="ECO:0000255" key="2"/>
<evidence type="ECO:0000305" key="3"/>
<accession>Q869W7</accession>
<accession>Q554D3</accession>